<accession>Q9P567</accession>
<accession>Q7SC52</accession>
<dbReference type="EC" id="6.2.1.5" evidence="1"/>
<dbReference type="EMBL" id="AL356324">
    <property type="protein sequence ID" value="CAB92021.1"/>
    <property type="molecule type" value="Genomic_DNA"/>
</dbReference>
<dbReference type="EMBL" id="CM002237">
    <property type="protein sequence ID" value="EAA34077.1"/>
    <property type="molecule type" value="Genomic_DNA"/>
</dbReference>
<dbReference type="PIR" id="T49777">
    <property type="entry name" value="T49777"/>
</dbReference>
<dbReference type="RefSeq" id="XP_963313.1">
    <property type="nucleotide sequence ID" value="XM_958220.3"/>
</dbReference>
<dbReference type="SMR" id="Q9P567"/>
<dbReference type="FunCoup" id="Q9P567">
    <property type="interactions" value="720"/>
</dbReference>
<dbReference type="STRING" id="367110.Q9P567"/>
<dbReference type="PaxDb" id="5141-EFNCRP00000008443"/>
<dbReference type="EnsemblFungi" id="EAA34077">
    <property type="protein sequence ID" value="EAA34077"/>
    <property type="gene ID" value="NCU08471"/>
</dbReference>
<dbReference type="GeneID" id="3879462"/>
<dbReference type="KEGG" id="ncr:NCU08471"/>
<dbReference type="VEuPathDB" id="FungiDB:NCU08471"/>
<dbReference type="HOGENOM" id="CLU_037430_0_2_1"/>
<dbReference type="InParanoid" id="Q9P567"/>
<dbReference type="OMA" id="ITACDEV"/>
<dbReference type="OrthoDB" id="1552at2759"/>
<dbReference type="UniPathway" id="UPA00223">
    <property type="reaction ID" value="UER00999"/>
</dbReference>
<dbReference type="Proteomes" id="UP000001805">
    <property type="component" value="Chromosome 6, Linkage Group II"/>
</dbReference>
<dbReference type="GO" id="GO:0005739">
    <property type="term" value="C:mitochondrion"/>
    <property type="evidence" value="ECO:0000318"/>
    <property type="project" value="GO_Central"/>
</dbReference>
<dbReference type="GO" id="GO:0042709">
    <property type="term" value="C:succinate-CoA ligase complex"/>
    <property type="evidence" value="ECO:0000318"/>
    <property type="project" value="GO_Central"/>
</dbReference>
<dbReference type="GO" id="GO:0005524">
    <property type="term" value="F:ATP binding"/>
    <property type="evidence" value="ECO:0007669"/>
    <property type="project" value="UniProtKB-UniRule"/>
</dbReference>
<dbReference type="GO" id="GO:0000287">
    <property type="term" value="F:magnesium ion binding"/>
    <property type="evidence" value="ECO:0007669"/>
    <property type="project" value="UniProtKB-UniRule"/>
</dbReference>
<dbReference type="GO" id="GO:0004775">
    <property type="term" value="F:succinate-CoA ligase (ADP-forming) activity"/>
    <property type="evidence" value="ECO:0000318"/>
    <property type="project" value="GO_Central"/>
</dbReference>
<dbReference type="GO" id="GO:0006104">
    <property type="term" value="P:succinyl-CoA metabolic process"/>
    <property type="evidence" value="ECO:0000318"/>
    <property type="project" value="GO_Central"/>
</dbReference>
<dbReference type="GO" id="GO:0006099">
    <property type="term" value="P:tricarboxylic acid cycle"/>
    <property type="evidence" value="ECO:0000318"/>
    <property type="project" value="GO_Central"/>
</dbReference>
<dbReference type="FunFam" id="3.30.470.20:FF:000002">
    <property type="entry name" value="Succinate--CoA ligase [ADP-forming] subunit beta"/>
    <property type="match status" value="1"/>
</dbReference>
<dbReference type="FunFam" id="3.40.50.261:FF:000001">
    <property type="entry name" value="Succinate--CoA ligase [ADP-forming] subunit beta"/>
    <property type="match status" value="1"/>
</dbReference>
<dbReference type="FunFam" id="3.30.1490.20:FF:000004">
    <property type="entry name" value="Succinate--CoA ligase [ADP-forming] subunit beta, mitochondrial"/>
    <property type="match status" value="1"/>
</dbReference>
<dbReference type="Gene3D" id="3.30.1490.20">
    <property type="entry name" value="ATP-grasp fold, A domain"/>
    <property type="match status" value="1"/>
</dbReference>
<dbReference type="Gene3D" id="3.30.470.20">
    <property type="entry name" value="ATP-grasp fold, B domain"/>
    <property type="match status" value="1"/>
</dbReference>
<dbReference type="Gene3D" id="3.40.50.261">
    <property type="entry name" value="Succinyl-CoA synthetase domains"/>
    <property type="match status" value="1"/>
</dbReference>
<dbReference type="HAMAP" id="MF_00558">
    <property type="entry name" value="Succ_CoA_beta"/>
    <property type="match status" value="1"/>
</dbReference>
<dbReference type="InterPro" id="IPR013650">
    <property type="entry name" value="ATP-grasp_succ-CoA_synth-type"/>
</dbReference>
<dbReference type="InterPro" id="IPR013815">
    <property type="entry name" value="ATP_grasp_subdomain_1"/>
</dbReference>
<dbReference type="InterPro" id="IPR017866">
    <property type="entry name" value="Succ-CoA_synthase_bsu_CS"/>
</dbReference>
<dbReference type="InterPro" id="IPR005811">
    <property type="entry name" value="SUCC_ACL_C"/>
</dbReference>
<dbReference type="InterPro" id="IPR005809">
    <property type="entry name" value="Succ_CoA_ligase-like_bsu"/>
</dbReference>
<dbReference type="InterPro" id="IPR016102">
    <property type="entry name" value="Succinyl-CoA_synth-like"/>
</dbReference>
<dbReference type="NCBIfam" id="NF001913">
    <property type="entry name" value="PRK00696.1"/>
    <property type="match status" value="1"/>
</dbReference>
<dbReference type="NCBIfam" id="TIGR01016">
    <property type="entry name" value="sucCoAbeta"/>
    <property type="match status" value="1"/>
</dbReference>
<dbReference type="PANTHER" id="PTHR11815:SF1">
    <property type="entry name" value="SUCCINATE--COA LIGASE [ADP-FORMING] SUBUNIT BETA, MITOCHONDRIAL"/>
    <property type="match status" value="1"/>
</dbReference>
<dbReference type="PANTHER" id="PTHR11815">
    <property type="entry name" value="SUCCINYL-COA SYNTHETASE BETA CHAIN"/>
    <property type="match status" value="1"/>
</dbReference>
<dbReference type="Pfam" id="PF08442">
    <property type="entry name" value="ATP-grasp_2"/>
    <property type="match status" value="1"/>
</dbReference>
<dbReference type="Pfam" id="PF00549">
    <property type="entry name" value="Ligase_CoA"/>
    <property type="match status" value="1"/>
</dbReference>
<dbReference type="PIRSF" id="PIRSF001554">
    <property type="entry name" value="SucCS_beta"/>
    <property type="match status" value="1"/>
</dbReference>
<dbReference type="SUPFAM" id="SSF56059">
    <property type="entry name" value="Glutathione synthetase ATP-binding domain-like"/>
    <property type="match status" value="1"/>
</dbReference>
<dbReference type="SUPFAM" id="SSF52210">
    <property type="entry name" value="Succinyl-CoA synthetase domains"/>
    <property type="match status" value="1"/>
</dbReference>
<dbReference type="PROSITE" id="PS01217">
    <property type="entry name" value="SUCCINYL_COA_LIG_3"/>
    <property type="match status" value="1"/>
</dbReference>
<gene>
    <name evidence="2" type="primary">tca-9</name>
    <name type="ORF">B9J10.140</name>
    <name type="ORF">NCU08471</name>
</gene>
<evidence type="ECO:0000255" key="1">
    <source>
        <dbReference type="HAMAP-Rule" id="MF_03219"/>
    </source>
</evidence>
<evidence type="ECO:0000303" key="2">
    <source>
    </source>
</evidence>
<evidence type="ECO:0000305" key="3">
    <source>
    </source>
</evidence>
<protein>
    <recommendedName>
        <fullName evidence="1">Succinate--CoA ligase [ADP-forming] subunit beta, mitochondrial</fullName>
        <ecNumber evidence="1">6.2.1.5</ecNumber>
    </recommendedName>
    <alternativeName>
        <fullName evidence="1">Succinyl-CoA synthetase beta chain</fullName>
        <shortName evidence="1">SCS-beta</shortName>
    </alternativeName>
</protein>
<feature type="transit peptide" description="Mitochondrion" evidence="1">
    <location>
        <begin position="1"/>
        <end position="34"/>
    </location>
</feature>
<feature type="chain" id="PRO_0000033363" description="Succinate--CoA ligase [ADP-forming] subunit beta, mitochondrial" evidence="1">
    <location>
        <begin position="35"/>
        <end position="447"/>
    </location>
</feature>
<feature type="domain" description="ATP-grasp" evidence="1">
    <location>
        <begin position="45"/>
        <end position="287"/>
    </location>
</feature>
<feature type="binding site" evidence="1">
    <location>
        <position position="82"/>
    </location>
    <ligand>
        <name>ATP</name>
        <dbReference type="ChEBI" id="CHEBI:30616"/>
    </ligand>
</feature>
<feature type="binding site" evidence="1">
    <location>
        <begin position="89"/>
        <end position="91"/>
    </location>
    <ligand>
        <name>ATP</name>
        <dbReference type="ChEBI" id="CHEBI:30616"/>
    </ligand>
</feature>
<feature type="binding site" evidence="1">
    <location>
        <position position="150"/>
    </location>
    <ligand>
        <name>ATP</name>
        <dbReference type="ChEBI" id="CHEBI:30616"/>
    </ligand>
</feature>
<feature type="binding site" evidence="1">
    <location>
        <position position="242"/>
    </location>
    <ligand>
        <name>Mg(2+)</name>
        <dbReference type="ChEBI" id="CHEBI:18420"/>
    </ligand>
</feature>
<feature type="binding site" evidence="1">
    <location>
        <position position="256"/>
    </location>
    <ligand>
        <name>Mg(2+)</name>
        <dbReference type="ChEBI" id="CHEBI:18420"/>
    </ligand>
</feature>
<feature type="binding site" evidence="1">
    <location>
        <position position="307"/>
    </location>
    <ligand>
        <name>substrate</name>
        <note>ligand shared with subunit alpha</note>
    </ligand>
</feature>
<feature type="binding site" evidence="1">
    <location>
        <begin position="364"/>
        <end position="366"/>
    </location>
    <ligand>
        <name>substrate</name>
        <note>ligand shared with subunit alpha</note>
    </ligand>
</feature>
<reference key="1">
    <citation type="journal article" date="2003" name="Nucleic Acids Res.">
        <title>What's in the genome of a filamentous fungus? Analysis of the Neurospora genome sequence.</title>
        <authorList>
            <person name="Mannhaupt G."/>
            <person name="Montrone C."/>
            <person name="Haase D."/>
            <person name="Mewes H.-W."/>
            <person name="Aign V."/>
            <person name="Hoheisel J.D."/>
            <person name="Fartmann B."/>
            <person name="Nyakatura G."/>
            <person name="Kempken F."/>
            <person name="Maier J."/>
            <person name="Schulte U."/>
        </authorList>
    </citation>
    <scope>NUCLEOTIDE SEQUENCE [LARGE SCALE GENOMIC DNA]</scope>
    <source>
        <strain>ATCC 24698 / 74-OR23-1A / CBS 708.71 / DSM 1257 / FGSC 987</strain>
    </source>
</reference>
<reference key="2">
    <citation type="journal article" date="2003" name="Nature">
        <title>The genome sequence of the filamentous fungus Neurospora crassa.</title>
        <authorList>
            <person name="Galagan J.E."/>
            <person name="Calvo S.E."/>
            <person name="Borkovich K.A."/>
            <person name="Selker E.U."/>
            <person name="Read N.D."/>
            <person name="Jaffe D.B."/>
            <person name="FitzHugh W."/>
            <person name="Ma L.-J."/>
            <person name="Smirnov S."/>
            <person name="Purcell S."/>
            <person name="Rehman B."/>
            <person name="Elkins T."/>
            <person name="Engels R."/>
            <person name="Wang S."/>
            <person name="Nielsen C.B."/>
            <person name="Butler J."/>
            <person name="Endrizzi M."/>
            <person name="Qui D."/>
            <person name="Ianakiev P."/>
            <person name="Bell-Pedersen D."/>
            <person name="Nelson M.A."/>
            <person name="Werner-Washburne M."/>
            <person name="Selitrennikoff C.P."/>
            <person name="Kinsey J.A."/>
            <person name="Braun E.L."/>
            <person name="Zelter A."/>
            <person name="Schulte U."/>
            <person name="Kothe G.O."/>
            <person name="Jedd G."/>
            <person name="Mewes H.-W."/>
            <person name="Staben C."/>
            <person name="Marcotte E."/>
            <person name="Greenberg D."/>
            <person name="Roy A."/>
            <person name="Foley K."/>
            <person name="Naylor J."/>
            <person name="Stange-Thomann N."/>
            <person name="Barrett R."/>
            <person name="Gnerre S."/>
            <person name="Kamal M."/>
            <person name="Kamvysselis M."/>
            <person name="Mauceli E.W."/>
            <person name="Bielke C."/>
            <person name="Rudd S."/>
            <person name="Frishman D."/>
            <person name="Krystofova S."/>
            <person name="Rasmussen C."/>
            <person name="Metzenberg R.L."/>
            <person name="Perkins D.D."/>
            <person name="Kroken S."/>
            <person name="Cogoni C."/>
            <person name="Macino G."/>
            <person name="Catcheside D.E.A."/>
            <person name="Li W."/>
            <person name="Pratt R.J."/>
            <person name="Osmani S.A."/>
            <person name="DeSouza C.P.C."/>
            <person name="Glass N.L."/>
            <person name="Orbach M.J."/>
            <person name="Berglund J.A."/>
            <person name="Voelker R."/>
            <person name="Yarden O."/>
            <person name="Plamann M."/>
            <person name="Seiler S."/>
            <person name="Dunlap J.C."/>
            <person name="Radford A."/>
            <person name="Aramayo R."/>
            <person name="Natvig D.O."/>
            <person name="Alex L.A."/>
            <person name="Mannhaupt G."/>
            <person name="Ebbole D.J."/>
            <person name="Freitag M."/>
            <person name="Paulsen I."/>
            <person name="Sachs M.S."/>
            <person name="Lander E.S."/>
            <person name="Nusbaum C."/>
            <person name="Birren B.W."/>
        </authorList>
    </citation>
    <scope>NUCLEOTIDE SEQUENCE [LARGE SCALE GENOMIC DNA]</scope>
    <source>
        <strain>ATCC 24698 / 74-OR23-1A / CBS 708.71 / DSM 1257 / FGSC 987</strain>
    </source>
</reference>
<reference key="3">
    <citation type="journal article" date="2004" name="Adv. Genet.">
        <title>Metabolic highways of Neurospora crassa revisited.</title>
        <authorList>
            <person name="Radford A."/>
        </authorList>
    </citation>
    <scope>PATHWAY</scope>
</reference>
<name>SUCB_NEUCR</name>
<keyword id="KW-0067">ATP-binding</keyword>
<keyword id="KW-0436">Ligase</keyword>
<keyword id="KW-0460">Magnesium</keyword>
<keyword id="KW-0479">Metal-binding</keyword>
<keyword id="KW-0496">Mitochondrion</keyword>
<keyword id="KW-0547">Nucleotide-binding</keyword>
<keyword id="KW-1185">Reference proteome</keyword>
<keyword id="KW-0809">Transit peptide</keyword>
<keyword id="KW-0816">Tricarboxylic acid cycle</keyword>
<proteinExistence type="inferred from homology"/>
<organism>
    <name type="scientific">Neurospora crassa (strain ATCC 24698 / 74-OR23-1A / CBS 708.71 / DSM 1257 / FGSC 987)</name>
    <dbReference type="NCBI Taxonomy" id="367110"/>
    <lineage>
        <taxon>Eukaryota</taxon>
        <taxon>Fungi</taxon>
        <taxon>Dikarya</taxon>
        <taxon>Ascomycota</taxon>
        <taxon>Pezizomycotina</taxon>
        <taxon>Sordariomycetes</taxon>
        <taxon>Sordariomycetidae</taxon>
        <taxon>Sordariales</taxon>
        <taxon>Sordariaceae</taxon>
        <taxon>Neurospora</taxon>
    </lineage>
</organism>
<comment type="function">
    <text evidence="1">Succinyl-CoA synthetase functions in the citric acid cycle (TCA), coupling the hydrolysis of succinyl-CoA to the synthesis of ATP and thus represents the only step of substrate-level phosphorylation in the TCA. The beta subunit provides nucleotide specificity of the enzyme and binds the substrate succinate, while the binding sites for coenzyme A and phosphate are found in the alpha subunit.</text>
</comment>
<comment type="catalytic activity">
    <reaction evidence="1">
        <text>succinate + ATP + CoA = succinyl-CoA + ADP + phosphate</text>
        <dbReference type="Rhea" id="RHEA:17661"/>
        <dbReference type="ChEBI" id="CHEBI:30031"/>
        <dbReference type="ChEBI" id="CHEBI:30616"/>
        <dbReference type="ChEBI" id="CHEBI:43474"/>
        <dbReference type="ChEBI" id="CHEBI:57287"/>
        <dbReference type="ChEBI" id="CHEBI:57292"/>
        <dbReference type="ChEBI" id="CHEBI:456216"/>
        <dbReference type="EC" id="6.2.1.5"/>
    </reaction>
</comment>
<comment type="cofactor">
    <cofactor evidence="1">
        <name>Mg(2+)</name>
        <dbReference type="ChEBI" id="CHEBI:18420"/>
    </cofactor>
    <text evidence="1">Binds 1 Mg(2+) ion per subunit.</text>
</comment>
<comment type="pathway">
    <text evidence="1 3">Carbohydrate metabolism; tricarboxylic acid cycle; succinate from succinyl-CoA (ligase route): step 1/1.</text>
</comment>
<comment type="subunit">
    <text evidence="1">Heterodimer of an alpha and a beta subunit.</text>
</comment>
<comment type="subcellular location">
    <subcellularLocation>
        <location evidence="1">Mitochondrion</location>
    </subcellularLocation>
</comment>
<comment type="similarity">
    <text evidence="1">Belongs to the succinate/malate CoA ligase beta subunit family.</text>
</comment>
<sequence>MFKLGRNRALASAFAATSRAPLASRLPSVSQQQRRALSIHEYLSADLLRQYGIGVPKGDVARTGAEAEAIAKQIGGEDMVIKAQVLAGGRGKGTFDNGLKGGVRVIYSPTEAKMFAEQMIGHKLITKQTGAQGRLCSAVYICERKFARREFYLAVLMDRASQGPVIVSSSQGGMDIEGVAKENPEAIHTTYIDINVGVTDEMARDIATKLGFSEQCVEEAKDTIQKLYKIFCEKDATQIEINPLSETSDHKVMAMDAKFGFDDNADFRQPDIFKLRDTTQEDPDEVRAAQAGLNFIKLDGDIGCLVNGAGLAMATMDIIKLNGGQPANFLDVGGGATPAAIREAFELITSDPKVTAIFVNIFGGIVRCDAIAHGLINTVKSLDLKIPIIARLQGTNMEAARQLINDSGMKIFSIDDLQSAAEKSVQLSKVVKMARDIDVGVEFTLGI</sequence>